<protein>
    <recommendedName>
        <fullName evidence="1">Putative 3-methyladenine DNA glycosylase</fullName>
        <ecNumber evidence="1">3.2.2.-</ecNumber>
    </recommendedName>
</protein>
<name>3MGH_LACAC</name>
<feature type="chain" id="PRO_0000265026" description="Putative 3-methyladenine DNA glycosylase">
    <location>
        <begin position="1"/>
        <end position="210"/>
    </location>
</feature>
<dbReference type="EC" id="3.2.2.-" evidence="1"/>
<dbReference type="EMBL" id="CP000033">
    <property type="protein sequence ID" value="AAV42014.1"/>
    <property type="molecule type" value="Genomic_DNA"/>
</dbReference>
<dbReference type="RefSeq" id="WP_011254043.1">
    <property type="nucleotide sequence ID" value="NC_006814.3"/>
</dbReference>
<dbReference type="RefSeq" id="YP_193045.1">
    <property type="nucleotide sequence ID" value="NC_006814.3"/>
</dbReference>
<dbReference type="SMR" id="Q5FMR0"/>
<dbReference type="STRING" id="272621.LBA0113"/>
<dbReference type="KEGG" id="lac:LBA0113"/>
<dbReference type="PATRIC" id="fig|272621.13.peg.108"/>
<dbReference type="eggNOG" id="COG2094">
    <property type="taxonomic scope" value="Bacteria"/>
</dbReference>
<dbReference type="HOGENOM" id="CLU_060471_2_0_9"/>
<dbReference type="OrthoDB" id="9794313at2"/>
<dbReference type="BioCyc" id="LACI272621:G1G49-112-MONOMER"/>
<dbReference type="Proteomes" id="UP000006381">
    <property type="component" value="Chromosome"/>
</dbReference>
<dbReference type="GO" id="GO:0003905">
    <property type="term" value="F:alkylbase DNA N-glycosylase activity"/>
    <property type="evidence" value="ECO:0007669"/>
    <property type="project" value="InterPro"/>
</dbReference>
<dbReference type="GO" id="GO:0003677">
    <property type="term" value="F:DNA binding"/>
    <property type="evidence" value="ECO:0007669"/>
    <property type="project" value="InterPro"/>
</dbReference>
<dbReference type="GO" id="GO:0006284">
    <property type="term" value="P:base-excision repair"/>
    <property type="evidence" value="ECO:0007669"/>
    <property type="project" value="InterPro"/>
</dbReference>
<dbReference type="CDD" id="cd00540">
    <property type="entry name" value="AAG"/>
    <property type="match status" value="1"/>
</dbReference>
<dbReference type="Gene3D" id="3.10.300.10">
    <property type="entry name" value="Methylpurine-DNA glycosylase (MPG)"/>
    <property type="match status" value="1"/>
</dbReference>
<dbReference type="HAMAP" id="MF_00527">
    <property type="entry name" value="3MGH"/>
    <property type="match status" value="1"/>
</dbReference>
<dbReference type="InterPro" id="IPR011034">
    <property type="entry name" value="Formyl_transferase-like_C_sf"/>
</dbReference>
<dbReference type="InterPro" id="IPR003180">
    <property type="entry name" value="MPG"/>
</dbReference>
<dbReference type="InterPro" id="IPR036995">
    <property type="entry name" value="MPG_sf"/>
</dbReference>
<dbReference type="NCBIfam" id="TIGR00567">
    <property type="entry name" value="3mg"/>
    <property type="match status" value="1"/>
</dbReference>
<dbReference type="PANTHER" id="PTHR10429">
    <property type="entry name" value="DNA-3-METHYLADENINE GLYCOSYLASE"/>
    <property type="match status" value="1"/>
</dbReference>
<dbReference type="PANTHER" id="PTHR10429:SF0">
    <property type="entry name" value="DNA-3-METHYLADENINE GLYCOSYLASE"/>
    <property type="match status" value="1"/>
</dbReference>
<dbReference type="Pfam" id="PF02245">
    <property type="entry name" value="Pur_DNA_glyco"/>
    <property type="match status" value="1"/>
</dbReference>
<dbReference type="SUPFAM" id="SSF50486">
    <property type="entry name" value="FMT C-terminal domain-like"/>
    <property type="match status" value="1"/>
</dbReference>
<reference key="1">
    <citation type="journal article" date="2005" name="Proc. Natl. Acad. Sci. U.S.A.">
        <title>Complete genome sequence of the probiotic lactic acid bacterium Lactobacillus acidophilus NCFM.</title>
        <authorList>
            <person name="Altermann E."/>
            <person name="Russell W.M."/>
            <person name="Azcarate-Peril M.A."/>
            <person name="Barrangou R."/>
            <person name="Buck B.L."/>
            <person name="McAuliffe O."/>
            <person name="Souther N."/>
            <person name="Dobson A."/>
            <person name="Duong T."/>
            <person name="Callanan M."/>
            <person name="Lick S."/>
            <person name="Hamrick A."/>
            <person name="Cano R."/>
            <person name="Klaenhammer T.R."/>
        </authorList>
    </citation>
    <scope>NUCLEOTIDE SEQUENCE [LARGE SCALE GENOMIC DNA]</scope>
    <source>
        <strain>ATCC 700396 / NCK56 / N2 / NCFM</strain>
    </source>
</reference>
<sequence length="210" mass="23844">MNYAEYFTNRSTDEITRDLIGRPLTFNDGQEKLGGYIVEAEAYMGKLDRAAHSYGGHRSPANEGLYRTGGTIYIYAQRQYFFFDVACQEENEPQGVLVRAIDPAWGIDSMIKNRNGKSGVLITNGPAKMMQAFGIHDKNWNLHFLSDSPFTIDLADNHKRIAQEIIADKRVGINQSDPIWANKKLRYYVAGNPYVSDMKKRDYASNNGWT</sequence>
<gene>
    <name type="ordered locus">LBA0113</name>
</gene>
<comment type="similarity">
    <text evidence="1">Belongs to the DNA glycosylase MPG family.</text>
</comment>
<accession>Q5FMR0</accession>
<proteinExistence type="inferred from homology"/>
<organism>
    <name type="scientific">Lactobacillus acidophilus (strain ATCC 700396 / NCK56 / N2 / NCFM)</name>
    <dbReference type="NCBI Taxonomy" id="272621"/>
    <lineage>
        <taxon>Bacteria</taxon>
        <taxon>Bacillati</taxon>
        <taxon>Bacillota</taxon>
        <taxon>Bacilli</taxon>
        <taxon>Lactobacillales</taxon>
        <taxon>Lactobacillaceae</taxon>
        <taxon>Lactobacillus</taxon>
    </lineage>
</organism>
<evidence type="ECO:0000255" key="1">
    <source>
        <dbReference type="HAMAP-Rule" id="MF_00527"/>
    </source>
</evidence>
<keyword id="KW-0227">DNA damage</keyword>
<keyword id="KW-0234">DNA repair</keyword>
<keyword id="KW-0378">Hydrolase</keyword>
<keyword id="KW-1185">Reference proteome</keyword>